<evidence type="ECO:0000255" key="1">
    <source>
        <dbReference type="HAMAP-Rule" id="MF_01263"/>
    </source>
</evidence>
<keyword id="KW-0067">ATP-binding</keyword>
<keyword id="KW-0460">Magnesium</keyword>
<keyword id="KW-0479">Metal-binding</keyword>
<keyword id="KW-0547">Nucleotide-binding</keyword>
<keyword id="KW-0548">Nucleotidyltransferase</keyword>
<keyword id="KW-0692">RNA repair</keyword>
<keyword id="KW-0694">RNA-binding</keyword>
<keyword id="KW-0808">Transferase</keyword>
<keyword id="KW-0819">tRNA processing</keyword>
<organism>
    <name type="scientific">Lactococcus lactis subsp. cremoris (strain MG1363)</name>
    <dbReference type="NCBI Taxonomy" id="416870"/>
    <lineage>
        <taxon>Bacteria</taxon>
        <taxon>Bacillati</taxon>
        <taxon>Bacillota</taxon>
        <taxon>Bacilli</taxon>
        <taxon>Lactobacillales</taxon>
        <taxon>Streptococcaceae</taxon>
        <taxon>Lactococcus</taxon>
        <taxon>Lactococcus cremoris subsp. cremoris</taxon>
    </lineage>
</organism>
<protein>
    <recommendedName>
        <fullName evidence="1">CCA-adding enzyme</fullName>
        <ecNumber evidence="1">2.7.7.72</ecNumber>
    </recommendedName>
    <alternativeName>
        <fullName evidence="1">CCA tRNA nucleotidyltransferase</fullName>
    </alternativeName>
    <alternativeName>
        <fullName evidence="1">tRNA CCA-pyrophosphorylase</fullName>
    </alternativeName>
    <alternativeName>
        <fullName evidence="1">tRNA adenylyl-/cytidylyl- transferase</fullName>
    </alternativeName>
    <alternativeName>
        <fullName evidence="1">tRNA nucleotidyltransferase</fullName>
    </alternativeName>
    <alternativeName>
        <fullName evidence="1">tRNA-NT</fullName>
    </alternativeName>
</protein>
<reference key="1">
    <citation type="journal article" date="2007" name="J. Bacteriol.">
        <title>The complete genome sequence of the lactic acid bacterial paradigm Lactococcus lactis subsp. cremoris MG1363.</title>
        <authorList>
            <person name="Wegmann U."/>
            <person name="O'Connell-Motherway M."/>
            <person name="Zomer A."/>
            <person name="Buist G."/>
            <person name="Shearman C."/>
            <person name="Canchaya C."/>
            <person name="Ventura M."/>
            <person name="Goesmann A."/>
            <person name="Gasson M.J."/>
            <person name="Kuipers O.P."/>
            <person name="van Sinderen D."/>
            <person name="Kok J."/>
        </authorList>
    </citation>
    <scope>NUCLEOTIDE SEQUENCE [LARGE SCALE GENOMIC DNA]</scope>
    <source>
        <strain>MG1363</strain>
    </source>
</reference>
<proteinExistence type="inferred from homology"/>
<name>CCA_LACLM</name>
<gene>
    <name evidence="1" type="primary">cca</name>
    <name type="ordered locus">llmg_0942</name>
</gene>
<accession>A2RJT1</accession>
<sequence>MKLEKLPEEFVQAQPVLEKISEHGFEAYFVGGSVRDVLLGREIHDVDIATSAYPEEIKDIFPYTIDVGIEHGTVLVLAGKSEAEHYEITTFRTESKYTDYRRPDHVDFVRDLREDLKRRDFTVNAFACDFEGQIIDLFDGLTDLKERRLTAVGSALERFNEDALRIMRAMRFASTLDFKIEEKTFSAMRERSHLLEKISVERIFIELDKLLLGSEWRNGLTLLIESEAWKYLPDFQDLALKKVLTELSVDFHFKNSEQAWAALLTRFSNIDVKAFLRKWKVSNEFSKYVADLVSAYELENWDLVSLYHFGLEKALLVDELKIAFGRDIDRERAVFINDQLQIHDKSEIVIAGKDLMDEFSLKPGPELGKILKTIEEKIVKNELKNEQIAILTEVKKMLELEK</sequence>
<comment type="function">
    <text evidence="1">Catalyzes the addition and repair of the essential 3'-terminal CCA sequence in tRNAs without using a nucleic acid template. Adds these three nucleotides in the order of C, C, and A to the tRNA nucleotide-73, using CTP and ATP as substrates and producing inorganic pyrophosphate. tRNA 3'-terminal CCA addition is required both for tRNA processing and repair. Also involved in tRNA surveillance by mediating tandem CCA addition to generate a CCACCA at the 3' terminus of unstable tRNAs. While stable tRNAs receive only 3'-terminal CCA, unstable tRNAs are marked with CCACCA and rapidly degraded.</text>
</comment>
<comment type="catalytic activity">
    <reaction evidence="1">
        <text>a tRNA precursor + 2 CTP + ATP = a tRNA with a 3' CCA end + 3 diphosphate</text>
        <dbReference type="Rhea" id="RHEA:14433"/>
        <dbReference type="Rhea" id="RHEA-COMP:10465"/>
        <dbReference type="Rhea" id="RHEA-COMP:10468"/>
        <dbReference type="ChEBI" id="CHEBI:30616"/>
        <dbReference type="ChEBI" id="CHEBI:33019"/>
        <dbReference type="ChEBI" id="CHEBI:37563"/>
        <dbReference type="ChEBI" id="CHEBI:74896"/>
        <dbReference type="ChEBI" id="CHEBI:83071"/>
        <dbReference type="EC" id="2.7.7.72"/>
    </reaction>
</comment>
<comment type="catalytic activity">
    <reaction evidence="1">
        <text>a tRNA with a 3' CCA end + 2 CTP + ATP = a tRNA with a 3' CCACCA end + 3 diphosphate</text>
        <dbReference type="Rhea" id="RHEA:76235"/>
        <dbReference type="Rhea" id="RHEA-COMP:10468"/>
        <dbReference type="Rhea" id="RHEA-COMP:18655"/>
        <dbReference type="ChEBI" id="CHEBI:30616"/>
        <dbReference type="ChEBI" id="CHEBI:33019"/>
        <dbReference type="ChEBI" id="CHEBI:37563"/>
        <dbReference type="ChEBI" id="CHEBI:83071"/>
        <dbReference type="ChEBI" id="CHEBI:195187"/>
    </reaction>
    <physiologicalReaction direction="left-to-right" evidence="1">
        <dbReference type="Rhea" id="RHEA:76236"/>
    </physiologicalReaction>
</comment>
<comment type="cofactor">
    <cofactor evidence="1">
        <name>Mg(2+)</name>
        <dbReference type="ChEBI" id="CHEBI:18420"/>
    </cofactor>
</comment>
<comment type="subunit">
    <text evidence="1">Homodimer.</text>
</comment>
<comment type="miscellaneous">
    <text evidence="1">A single active site specifically recognizes both ATP and CTP and is responsible for their addition.</text>
</comment>
<comment type="similarity">
    <text evidence="1">Belongs to the tRNA nucleotidyltransferase/poly(A) polymerase family. Bacterial CCA-adding enzyme type 3 subfamily.</text>
</comment>
<feature type="chain" id="PRO_1000054326" description="CCA-adding enzyme">
    <location>
        <begin position="1"/>
        <end position="402"/>
    </location>
</feature>
<feature type="binding site" evidence="1">
    <location>
        <position position="32"/>
    </location>
    <ligand>
        <name>ATP</name>
        <dbReference type="ChEBI" id="CHEBI:30616"/>
    </ligand>
</feature>
<feature type="binding site" evidence="1">
    <location>
        <position position="32"/>
    </location>
    <ligand>
        <name>CTP</name>
        <dbReference type="ChEBI" id="CHEBI:37563"/>
    </ligand>
</feature>
<feature type="binding site" evidence="1">
    <location>
        <position position="35"/>
    </location>
    <ligand>
        <name>ATP</name>
        <dbReference type="ChEBI" id="CHEBI:30616"/>
    </ligand>
</feature>
<feature type="binding site" evidence="1">
    <location>
        <position position="35"/>
    </location>
    <ligand>
        <name>CTP</name>
        <dbReference type="ChEBI" id="CHEBI:37563"/>
    </ligand>
</feature>
<feature type="binding site" evidence="1">
    <location>
        <position position="45"/>
    </location>
    <ligand>
        <name>Mg(2+)</name>
        <dbReference type="ChEBI" id="CHEBI:18420"/>
    </ligand>
</feature>
<feature type="binding site" evidence="1">
    <location>
        <position position="47"/>
    </location>
    <ligand>
        <name>Mg(2+)</name>
        <dbReference type="ChEBI" id="CHEBI:18420"/>
    </ligand>
</feature>
<feature type="binding site" evidence="1">
    <location>
        <position position="119"/>
    </location>
    <ligand>
        <name>ATP</name>
        <dbReference type="ChEBI" id="CHEBI:30616"/>
    </ligand>
</feature>
<feature type="binding site" evidence="1">
    <location>
        <position position="119"/>
    </location>
    <ligand>
        <name>CTP</name>
        <dbReference type="ChEBI" id="CHEBI:37563"/>
    </ligand>
</feature>
<feature type="binding site" evidence="1">
    <location>
        <position position="162"/>
    </location>
    <ligand>
        <name>ATP</name>
        <dbReference type="ChEBI" id="CHEBI:30616"/>
    </ligand>
</feature>
<feature type="binding site" evidence="1">
    <location>
        <position position="162"/>
    </location>
    <ligand>
        <name>CTP</name>
        <dbReference type="ChEBI" id="CHEBI:37563"/>
    </ligand>
</feature>
<feature type="binding site" evidence="1">
    <location>
        <position position="165"/>
    </location>
    <ligand>
        <name>ATP</name>
        <dbReference type="ChEBI" id="CHEBI:30616"/>
    </ligand>
</feature>
<feature type="binding site" evidence="1">
    <location>
        <position position="165"/>
    </location>
    <ligand>
        <name>CTP</name>
        <dbReference type="ChEBI" id="CHEBI:37563"/>
    </ligand>
</feature>
<feature type="binding site" evidence="1">
    <location>
        <position position="168"/>
    </location>
    <ligand>
        <name>ATP</name>
        <dbReference type="ChEBI" id="CHEBI:30616"/>
    </ligand>
</feature>
<feature type="binding site" evidence="1">
    <location>
        <position position="168"/>
    </location>
    <ligand>
        <name>CTP</name>
        <dbReference type="ChEBI" id="CHEBI:37563"/>
    </ligand>
</feature>
<feature type="binding site" evidence="1">
    <location>
        <position position="171"/>
    </location>
    <ligand>
        <name>ATP</name>
        <dbReference type="ChEBI" id="CHEBI:30616"/>
    </ligand>
</feature>
<feature type="binding site" evidence="1">
    <location>
        <position position="171"/>
    </location>
    <ligand>
        <name>CTP</name>
        <dbReference type="ChEBI" id="CHEBI:37563"/>
    </ligand>
</feature>
<dbReference type="EC" id="2.7.7.72" evidence="1"/>
<dbReference type="EMBL" id="AM406671">
    <property type="protein sequence ID" value="CAL97536.1"/>
    <property type="molecule type" value="Genomic_DNA"/>
</dbReference>
<dbReference type="RefSeq" id="WP_011834887.1">
    <property type="nucleotide sequence ID" value="NC_009004.1"/>
</dbReference>
<dbReference type="SMR" id="A2RJT1"/>
<dbReference type="STRING" id="416870.llmg_0942"/>
<dbReference type="KEGG" id="llm:llmg_0942"/>
<dbReference type="eggNOG" id="COG0617">
    <property type="taxonomic scope" value="Bacteria"/>
</dbReference>
<dbReference type="HOGENOM" id="CLU_015961_3_1_9"/>
<dbReference type="OrthoDB" id="9805698at2"/>
<dbReference type="PhylomeDB" id="A2RJT1"/>
<dbReference type="Proteomes" id="UP000000364">
    <property type="component" value="Chromosome"/>
</dbReference>
<dbReference type="GO" id="GO:0005524">
    <property type="term" value="F:ATP binding"/>
    <property type="evidence" value="ECO:0007669"/>
    <property type="project" value="UniProtKB-UniRule"/>
</dbReference>
<dbReference type="GO" id="GO:0004810">
    <property type="term" value="F:CCA tRNA nucleotidyltransferase activity"/>
    <property type="evidence" value="ECO:0007669"/>
    <property type="project" value="UniProtKB-UniRule"/>
</dbReference>
<dbReference type="GO" id="GO:0000287">
    <property type="term" value="F:magnesium ion binding"/>
    <property type="evidence" value="ECO:0007669"/>
    <property type="project" value="UniProtKB-UniRule"/>
</dbReference>
<dbReference type="GO" id="GO:0000049">
    <property type="term" value="F:tRNA binding"/>
    <property type="evidence" value="ECO:0007669"/>
    <property type="project" value="UniProtKB-UniRule"/>
</dbReference>
<dbReference type="GO" id="GO:0042245">
    <property type="term" value="P:RNA repair"/>
    <property type="evidence" value="ECO:0007669"/>
    <property type="project" value="UniProtKB-KW"/>
</dbReference>
<dbReference type="GO" id="GO:0001680">
    <property type="term" value="P:tRNA 3'-terminal CCA addition"/>
    <property type="evidence" value="ECO:0007669"/>
    <property type="project" value="UniProtKB-UniRule"/>
</dbReference>
<dbReference type="CDD" id="cd05398">
    <property type="entry name" value="NT_ClassII-CCAase"/>
    <property type="match status" value="1"/>
</dbReference>
<dbReference type="Gene3D" id="1.10.110.30">
    <property type="match status" value="1"/>
</dbReference>
<dbReference type="Gene3D" id="1.10.246.80">
    <property type="match status" value="1"/>
</dbReference>
<dbReference type="Gene3D" id="1.20.58.560">
    <property type="match status" value="1"/>
</dbReference>
<dbReference type="Gene3D" id="3.30.460.10">
    <property type="entry name" value="Beta Polymerase, domain 2"/>
    <property type="match status" value="1"/>
</dbReference>
<dbReference type="HAMAP" id="MF_01263">
    <property type="entry name" value="CCA_bact_type3"/>
    <property type="match status" value="1"/>
</dbReference>
<dbReference type="InterPro" id="IPR050264">
    <property type="entry name" value="Bact_CCA-adding_enz_type3_sf"/>
</dbReference>
<dbReference type="InterPro" id="IPR032810">
    <property type="entry name" value="CCA-adding_enz_C"/>
</dbReference>
<dbReference type="InterPro" id="IPR023068">
    <property type="entry name" value="CCA-adding_enz_firmicutes"/>
</dbReference>
<dbReference type="InterPro" id="IPR043519">
    <property type="entry name" value="NT_sf"/>
</dbReference>
<dbReference type="InterPro" id="IPR002646">
    <property type="entry name" value="PolA_pol_head_dom"/>
</dbReference>
<dbReference type="InterPro" id="IPR032828">
    <property type="entry name" value="PolyA_RNA-bd"/>
</dbReference>
<dbReference type="NCBIfam" id="NF009814">
    <property type="entry name" value="PRK13299.1"/>
    <property type="match status" value="1"/>
</dbReference>
<dbReference type="PANTHER" id="PTHR46173">
    <property type="entry name" value="CCA TRNA NUCLEOTIDYLTRANSFERASE 1, MITOCHONDRIAL"/>
    <property type="match status" value="1"/>
</dbReference>
<dbReference type="PANTHER" id="PTHR46173:SF1">
    <property type="entry name" value="CCA TRNA NUCLEOTIDYLTRANSFERASE 1, MITOCHONDRIAL"/>
    <property type="match status" value="1"/>
</dbReference>
<dbReference type="Pfam" id="PF01743">
    <property type="entry name" value="PolyA_pol"/>
    <property type="match status" value="1"/>
</dbReference>
<dbReference type="Pfam" id="PF12627">
    <property type="entry name" value="PolyA_pol_RNAbd"/>
    <property type="match status" value="1"/>
</dbReference>
<dbReference type="Pfam" id="PF13735">
    <property type="entry name" value="tRNA_NucTran2_2"/>
    <property type="match status" value="1"/>
</dbReference>
<dbReference type="SUPFAM" id="SSF81301">
    <property type="entry name" value="Nucleotidyltransferase"/>
    <property type="match status" value="1"/>
</dbReference>
<dbReference type="SUPFAM" id="SSF81891">
    <property type="entry name" value="Poly A polymerase C-terminal region-like"/>
    <property type="match status" value="1"/>
</dbReference>